<protein>
    <recommendedName>
        <fullName evidence="2">Ribosomal large subunit pseudouridine synthase D</fullName>
        <ecNumber evidence="2">5.4.99.23</ecNumber>
    </recommendedName>
    <alternativeName>
        <fullName>23S rRNA pseudouridine(1911/1915/1917) synthase</fullName>
    </alternativeName>
    <alternativeName>
        <fullName>rRNA pseudouridylate synthase D</fullName>
    </alternativeName>
    <alternativeName>
        <fullName>rRNA-uridine isomerase D</fullName>
    </alternativeName>
</protein>
<dbReference type="EC" id="5.4.99.23" evidence="2"/>
<dbReference type="EMBL" id="AE003852">
    <property type="protein sequence ID" value="AAF93874.1"/>
    <property type="molecule type" value="Genomic_DNA"/>
</dbReference>
<dbReference type="PIR" id="G82289">
    <property type="entry name" value="G82289"/>
</dbReference>
<dbReference type="RefSeq" id="NP_230358.1">
    <property type="nucleotide sequence ID" value="NC_002505.1"/>
</dbReference>
<dbReference type="RefSeq" id="WP_000941107.1">
    <property type="nucleotide sequence ID" value="NZ_LT906614.1"/>
</dbReference>
<dbReference type="SMR" id="Q9KU20"/>
<dbReference type="STRING" id="243277.VC_0709"/>
<dbReference type="DNASU" id="2615713"/>
<dbReference type="EnsemblBacteria" id="AAF93874">
    <property type="protein sequence ID" value="AAF93874"/>
    <property type="gene ID" value="VC_0709"/>
</dbReference>
<dbReference type="KEGG" id="vch:VC_0709"/>
<dbReference type="PATRIC" id="fig|243277.26.peg.679"/>
<dbReference type="eggNOG" id="COG0564">
    <property type="taxonomic scope" value="Bacteria"/>
</dbReference>
<dbReference type="HOGENOM" id="CLU_016902_4_0_6"/>
<dbReference type="Proteomes" id="UP000000584">
    <property type="component" value="Chromosome 1"/>
</dbReference>
<dbReference type="GO" id="GO:0005737">
    <property type="term" value="C:cytoplasm"/>
    <property type="evidence" value="ECO:0007669"/>
    <property type="project" value="UniProtKB-SubCell"/>
</dbReference>
<dbReference type="GO" id="GO:0160140">
    <property type="term" value="F:23S rRNA pseudouridine(1911/1915/1917) synthase activity"/>
    <property type="evidence" value="ECO:0007669"/>
    <property type="project" value="UniProtKB-EC"/>
</dbReference>
<dbReference type="GO" id="GO:0009982">
    <property type="term" value="F:pseudouridine synthase activity"/>
    <property type="evidence" value="ECO:0000318"/>
    <property type="project" value="GO_Central"/>
</dbReference>
<dbReference type="GO" id="GO:0003723">
    <property type="term" value="F:RNA binding"/>
    <property type="evidence" value="ECO:0007669"/>
    <property type="project" value="UniProtKB-KW"/>
</dbReference>
<dbReference type="GO" id="GO:0000455">
    <property type="term" value="P:enzyme-directed rRNA pseudouridine synthesis"/>
    <property type="evidence" value="ECO:0000318"/>
    <property type="project" value="GO_Central"/>
</dbReference>
<dbReference type="CDD" id="cd02869">
    <property type="entry name" value="PseudoU_synth_RluA_like"/>
    <property type="match status" value="1"/>
</dbReference>
<dbReference type="CDD" id="cd00165">
    <property type="entry name" value="S4"/>
    <property type="match status" value="1"/>
</dbReference>
<dbReference type="FunFam" id="3.10.290.10:FF:000011">
    <property type="entry name" value="Pseudouridine synthase"/>
    <property type="match status" value="1"/>
</dbReference>
<dbReference type="FunFam" id="3.30.2350.10:FF:000006">
    <property type="entry name" value="Pseudouridine synthase"/>
    <property type="match status" value="1"/>
</dbReference>
<dbReference type="Gene3D" id="3.30.2350.10">
    <property type="entry name" value="Pseudouridine synthase"/>
    <property type="match status" value="1"/>
</dbReference>
<dbReference type="Gene3D" id="3.10.290.10">
    <property type="entry name" value="RNA-binding S4 domain"/>
    <property type="match status" value="1"/>
</dbReference>
<dbReference type="InterPro" id="IPR020103">
    <property type="entry name" value="PsdUridine_synth_cat_dom_sf"/>
</dbReference>
<dbReference type="InterPro" id="IPR006224">
    <property type="entry name" value="PsdUridine_synth_RluA-like_CS"/>
</dbReference>
<dbReference type="InterPro" id="IPR006225">
    <property type="entry name" value="PsdUridine_synth_RluC/D"/>
</dbReference>
<dbReference type="InterPro" id="IPR006145">
    <property type="entry name" value="PsdUridine_synth_RsuA/RluA"/>
</dbReference>
<dbReference type="InterPro" id="IPR050188">
    <property type="entry name" value="RluA_PseudoU_synthase"/>
</dbReference>
<dbReference type="InterPro" id="IPR002942">
    <property type="entry name" value="S4_RNA-bd"/>
</dbReference>
<dbReference type="InterPro" id="IPR036986">
    <property type="entry name" value="S4_RNA-bd_sf"/>
</dbReference>
<dbReference type="NCBIfam" id="NF008385">
    <property type="entry name" value="PRK11180.1"/>
    <property type="match status" value="1"/>
</dbReference>
<dbReference type="NCBIfam" id="TIGR00005">
    <property type="entry name" value="rluA_subfam"/>
    <property type="match status" value="1"/>
</dbReference>
<dbReference type="PANTHER" id="PTHR21600">
    <property type="entry name" value="MITOCHONDRIAL RNA PSEUDOURIDINE SYNTHASE"/>
    <property type="match status" value="1"/>
</dbReference>
<dbReference type="PANTHER" id="PTHR21600:SF44">
    <property type="entry name" value="RIBOSOMAL LARGE SUBUNIT PSEUDOURIDINE SYNTHASE D"/>
    <property type="match status" value="1"/>
</dbReference>
<dbReference type="Pfam" id="PF00849">
    <property type="entry name" value="PseudoU_synth_2"/>
    <property type="match status" value="1"/>
</dbReference>
<dbReference type="Pfam" id="PF01479">
    <property type="entry name" value="S4"/>
    <property type="match status" value="1"/>
</dbReference>
<dbReference type="SMART" id="SM00363">
    <property type="entry name" value="S4"/>
    <property type="match status" value="1"/>
</dbReference>
<dbReference type="SUPFAM" id="SSF55174">
    <property type="entry name" value="Alpha-L RNA-binding motif"/>
    <property type="match status" value="1"/>
</dbReference>
<dbReference type="SUPFAM" id="SSF55120">
    <property type="entry name" value="Pseudouridine synthase"/>
    <property type="match status" value="1"/>
</dbReference>
<dbReference type="PROSITE" id="PS01129">
    <property type="entry name" value="PSI_RLU"/>
    <property type="match status" value="1"/>
</dbReference>
<dbReference type="PROSITE" id="PS50889">
    <property type="entry name" value="S4"/>
    <property type="match status" value="1"/>
</dbReference>
<name>RLUD_VIBCH</name>
<sequence length="324" mass="36742">MAHQIELTQTVKDSQLGQRLDQAVAELFTDFSRSRLKEWLLEGKIAVNGDVITKPRTKVMGGEVITVQAELEDEQRWEAQDLPLNIVYEDDDIIVINKPRDFVVHPGAGQADKTVLNALLFHYSPIAEVPRAGIVHRLDKDTTGLMVVAKTVPAQTRLVRALQKRDVTREYEAIVIGTMTAGGMIDKPIGRHSTKRTLMSVSPMGKHAVTHYRVAEHFREHTRLRLRLETGRTHQIRVHMAYLQHPLLGDTAYGGRARIPKGATEELTEMIRDFDRQALHAVMLKFEHPVTGEELEFHAPVPDDMVEMTLALREDAKLNRTEEY</sequence>
<gene>
    <name type="primary">rluD</name>
    <name type="ordered locus">VC_0709</name>
</gene>
<organism>
    <name type="scientific">Vibrio cholerae serotype O1 (strain ATCC 39315 / El Tor Inaba N16961)</name>
    <dbReference type="NCBI Taxonomy" id="243277"/>
    <lineage>
        <taxon>Bacteria</taxon>
        <taxon>Pseudomonadati</taxon>
        <taxon>Pseudomonadota</taxon>
        <taxon>Gammaproteobacteria</taxon>
        <taxon>Vibrionales</taxon>
        <taxon>Vibrionaceae</taxon>
        <taxon>Vibrio</taxon>
    </lineage>
</organism>
<feature type="chain" id="PRO_0000162702" description="Ribosomal large subunit pseudouridine synthase D">
    <location>
        <begin position="1"/>
        <end position="324"/>
    </location>
</feature>
<feature type="domain" description="S4 RNA-binding" evidence="3">
    <location>
        <begin position="18"/>
        <end position="91"/>
    </location>
</feature>
<feature type="active site" evidence="1">
    <location>
        <position position="139"/>
    </location>
</feature>
<reference key="1">
    <citation type="journal article" date="2000" name="Nature">
        <title>DNA sequence of both chromosomes of the cholera pathogen Vibrio cholerae.</title>
        <authorList>
            <person name="Heidelberg J.F."/>
            <person name="Eisen J.A."/>
            <person name="Nelson W.C."/>
            <person name="Clayton R.A."/>
            <person name="Gwinn M.L."/>
            <person name="Dodson R.J."/>
            <person name="Haft D.H."/>
            <person name="Hickey E.K."/>
            <person name="Peterson J.D."/>
            <person name="Umayam L.A."/>
            <person name="Gill S.R."/>
            <person name="Nelson K.E."/>
            <person name="Read T.D."/>
            <person name="Tettelin H."/>
            <person name="Richardson D.L."/>
            <person name="Ermolaeva M.D."/>
            <person name="Vamathevan J.J."/>
            <person name="Bass S."/>
            <person name="Qin H."/>
            <person name="Dragoi I."/>
            <person name="Sellers P."/>
            <person name="McDonald L.A."/>
            <person name="Utterback T.R."/>
            <person name="Fleischmann R.D."/>
            <person name="Nierman W.C."/>
            <person name="White O."/>
            <person name="Salzberg S.L."/>
            <person name="Smith H.O."/>
            <person name="Colwell R.R."/>
            <person name="Mekalanos J.J."/>
            <person name="Venter J.C."/>
            <person name="Fraser C.M."/>
        </authorList>
    </citation>
    <scope>NUCLEOTIDE SEQUENCE [LARGE SCALE GENOMIC DNA]</scope>
    <source>
        <strain>ATCC 39315 / El Tor Inaba N16961</strain>
    </source>
</reference>
<accession>Q9KU20</accession>
<evidence type="ECO:0000250" key="1"/>
<evidence type="ECO:0000250" key="2">
    <source>
        <dbReference type="UniProtKB" id="P33643"/>
    </source>
</evidence>
<evidence type="ECO:0000255" key="3">
    <source>
        <dbReference type="PROSITE-ProRule" id="PRU00182"/>
    </source>
</evidence>
<evidence type="ECO:0000305" key="4"/>
<proteinExistence type="inferred from homology"/>
<comment type="function">
    <text evidence="2">Responsible for synthesis of pseudouridine from uracil at positions 1911, 1915 and 1917 in 23S ribosomal RNA.</text>
</comment>
<comment type="catalytic activity">
    <reaction evidence="2">
        <text>uridine(1911/1915/1917) in 23S rRNA = pseudouridine(1911/1915/1917) in 23S rRNA</text>
        <dbReference type="Rhea" id="RHEA:42524"/>
        <dbReference type="Rhea" id="RHEA-COMP:10097"/>
        <dbReference type="Rhea" id="RHEA-COMP:10098"/>
        <dbReference type="ChEBI" id="CHEBI:65314"/>
        <dbReference type="ChEBI" id="CHEBI:65315"/>
        <dbReference type="EC" id="5.4.99.23"/>
    </reaction>
</comment>
<comment type="subcellular location">
    <subcellularLocation>
        <location evidence="2">Cytoplasm</location>
    </subcellularLocation>
    <text evidence="2">Associates with late stage pre-50S ribosomal subunits.</text>
</comment>
<comment type="similarity">
    <text evidence="4">Belongs to the pseudouridine synthase RluA family.</text>
</comment>
<keyword id="KW-0963">Cytoplasm</keyword>
<keyword id="KW-0413">Isomerase</keyword>
<keyword id="KW-1185">Reference proteome</keyword>
<keyword id="KW-0694">RNA-binding</keyword>
<keyword id="KW-0698">rRNA processing</keyword>